<feature type="chain" id="PRO_1000121551" description="Imidazolonepropionase">
    <location>
        <begin position="1"/>
        <end position="407"/>
    </location>
</feature>
<feature type="binding site" evidence="1">
    <location>
        <position position="74"/>
    </location>
    <ligand>
        <name>Fe(3+)</name>
        <dbReference type="ChEBI" id="CHEBI:29034"/>
    </ligand>
</feature>
<feature type="binding site" evidence="1">
    <location>
        <position position="74"/>
    </location>
    <ligand>
        <name>Zn(2+)</name>
        <dbReference type="ChEBI" id="CHEBI:29105"/>
    </ligand>
</feature>
<feature type="binding site" evidence="1">
    <location>
        <position position="76"/>
    </location>
    <ligand>
        <name>Fe(3+)</name>
        <dbReference type="ChEBI" id="CHEBI:29034"/>
    </ligand>
</feature>
<feature type="binding site" evidence="1">
    <location>
        <position position="76"/>
    </location>
    <ligand>
        <name>Zn(2+)</name>
        <dbReference type="ChEBI" id="CHEBI:29105"/>
    </ligand>
</feature>
<feature type="binding site" evidence="1">
    <location>
        <position position="83"/>
    </location>
    <ligand>
        <name>4-imidazolone-5-propanoate</name>
        <dbReference type="ChEBI" id="CHEBI:77893"/>
    </ligand>
</feature>
<feature type="binding site" evidence="1">
    <location>
        <position position="146"/>
    </location>
    <ligand>
        <name>4-imidazolone-5-propanoate</name>
        <dbReference type="ChEBI" id="CHEBI:77893"/>
    </ligand>
</feature>
<feature type="binding site" evidence="1">
    <location>
        <position position="146"/>
    </location>
    <ligand>
        <name>N-formimidoyl-L-glutamate</name>
        <dbReference type="ChEBI" id="CHEBI:58928"/>
    </ligand>
</feature>
<feature type="binding site" evidence="1">
    <location>
        <position position="179"/>
    </location>
    <ligand>
        <name>4-imidazolone-5-propanoate</name>
        <dbReference type="ChEBI" id="CHEBI:77893"/>
    </ligand>
</feature>
<feature type="binding site" evidence="1">
    <location>
        <position position="244"/>
    </location>
    <ligand>
        <name>Fe(3+)</name>
        <dbReference type="ChEBI" id="CHEBI:29034"/>
    </ligand>
</feature>
<feature type="binding site" evidence="1">
    <location>
        <position position="244"/>
    </location>
    <ligand>
        <name>Zn(2+)</name>
        <dbReference type="ChEBI" id="CHEBI:29105"/>
    </ligand>
</feature>
<feature type="binding site" evidence="1">
    <location>
        <position position="247"/>
    </location>
    <ligand>
        <name>4-imidazolone-5-propanoate</name>
        <dbReference type="ChEBI" id="CHEBI:77893"/>
    </ligand>
</feature>
<feature type="binding site" evidence="1">
    <location>
        <position position="319"/>
    </location>
    <ligand>
        <name>Fe(3+)</name>
        <dbReference type="ChEBI" id="CHEBI:29034"/>
    </ligand>
</feature>
<feature type="binding site" evidence="1">
    <location>
        <position position="319"/>
    </location>
    <ligand>
        <name>Zn(2+)</name>
        <dbReference type="ChEBI" id="CHEBI:29105"/>
    </ligand>
</feature>
<feature type="binding site" evidence="1">
    <location>
        <position position="321"/>
    </location>
    <ligand>
        <name>N-formimidoyl-L-glutamate</name>
        <dbReference type="ChEBI" id="CHEBI:58928"/>
    </ligand>
</feature>
<feature type="binding site" evidence="1">
    <location>
        <position position="323"/>
    </location>
    <ligand>
        <name>N-formimidoyl-L-glutamate</name>
        <dbReference type="ChEBI" id="CHEBI:58928"/>
    </ligand>
</feature>
<feature type="binding site" evidence="1">
    <location>
        <position position="324"/>
    </location>
    <ligand>
        <name>4-imidazolone-5-propanoate</name>
        <dbReference type="ChEBI" id="CHEBI:77893"/>
    </ligand>
</feature>
<proteinExistence type="inferred from homology"/>
<accession>B5QX58</accession>
<gene>
    <name evidence="1" type="primary">hutI</name>
    <name type="ordered locus">SEN0732</name>
</gene>
<evidence type="ECO:0000255" key="1">
    <source>
        <dbReference type="HAMAP-Rule" id="MF_00372"/>
    </source>
</evidence>
<protein>
    <recommendedName>
        <fullName evidence="1">Imidazolonepropionase</fullName>
        <ecNumber evidence="1">3.5.2.7</ecNumber>
    </recommendedName>
    <alternativeName>
        <fullName evidence="1">Imidazolone-5-propionate hydrolase</fullName>
    </alternativeName>
</protein>
<keyword id="KW-0963">Cytoplasm</keyword>
<keyword id="KW-0369">Histidine metabolism</keyword>
<keyword id="KW-0378">Hydrolase</keyword>
<keyword id="KW-0408">Iron</keyword>
<keyword id="KW-0479">Metal-binding</keyword>
<keyword id="KW-0862">Zinc</keyword>
<comment type="function">
    <text evidence="1">Catalyzes the hydrolytic cleavage of the carbon-nitrogen bond in imidazolone-5-propanoate to yield N-formimidoyl-L-glutamate. It is the third step in the universal histidine degradation pathway.</text>
</comment>
<comment type="catalytic activity">
    <reaction evidence="1">
        <text>4-imidazolone-5-propanoate + H2O = N-formimidoyl-L-glutamate</text>
        <dbReference type="Rhea" id="RHEA:23660"/>
        <dbReference type="ChEBI" id="CHEBI:15377"/>
        <dbReference type="ChEBI" id="CHEBI:58928"/>
        <dbReference type="ChEBI" id="CHEBI:77893"/>
        <dbReference type="EC" id="3.5.2.7"/>
    </reaction>
</comment>
<comment type="cofactor">
    <cofactor evidence="1">
        <name>Zn(2+)</name>
        <dbReference type="ChEBI" id="CHEBI:29105"/>
    </cofactor>
    <cofactor evidence="1">
        <name>Fe(3+)</name>
        <dbReference type="ChEBI" id="CHEBI:29034"/>
    </cofactor>
    <text evidence="1">Binds 1 zinc or iron ion per subunit.</text>
</comment>
<comment type="pathway">
    <text evidence="1">Amino-acid degradation; L-histidine degradation into L-glutamate; N-formimidoyl-L-glutamate from L-histidine: step 3/3.</text>
</comment>
<comment type="subcellular location">
    <subcellularLocation>
        <location evidence="1">Cytoplasm</location>
    </subcellularLocation>
</comment>
<comment type="similarity">
    <text evidence="1">Belongs to the metallo-dependent hydrolases superfamily. HutI family.</text>
</comment>
<dbReference type="EC" id="3.5.2.7" evidence="1"/>
<dbReference type="EMBL" id="AM933172">
    <property type="protein sequence ID" value="CAR32318.1"/>
    <property type="molecule type" value="Genomic_DNA"/>
</dbReference>
<dbReference type="RefSeq" id="WP_001249485.1">
    <property type="nucleotide sequence ID" value="NC_011294.1"/>
</dbReference>
<dbReference type="SMR" id="B5QX58"/>
<dbReference type="KEGG" id="set:SEN0732"/>
<dbReference type="HOGENOM" id="CLU_041647_0_0_6"/>
<dbReference type="UniPathway" id="UPA00379">
    <property type="reaction ID" value="UER00551"/>
</dbReference>
<dbReference type="Proteomes" id="UP000000613">
    <property type="component" value="Chromosome"/>
</dbReference>
<dbReference type="GO" id="GO:0005737">
    <property type="term" value="C:cytoplasm"/>
    <property type="evidence" value="ECO:0007669"/>
    <property type="project" value="UniProtKB-SubCell"/>
</dbReference>
<dbReference type="GO" id="GO:0050480">
    <property type="term" value="F:imidazolonepropionase activity"/>
    <property type="evidence" value="ECO:0007669"/>
    <property type="project" value="UniProtKB-UniRule"/>
</dbReference>
<dbReference type="GO" id="GO:0005506">
    <property type="term" value="F:iron ion binding"/>
    <property type="evidence" value="ECO:0007669"/>
    <property type="project" value="UniProtKB-UniRule"/>
</dbReference>
<dbReference type="GO" id="GO:0008270">
    <property type="term" value="F:zinc ion binding"/>
    <property type="evidence" value="ECO:0007669"/>
    <property type="project" value="UniProtKB-UniRule"/>
</dbReference>
<dbReference type="GO" id="GO:0019556">
    <property type="term" value="P:L-histidine catabolic process to glutamate and formamide"/>
    <property type="evidence" value="ECO:0007669"/>
    <property type="project" value="UniProtKB-UniPathway"/>
</dbReference>
<dbReference type="GO" id="GO:0019557">
    <property type="term" value="P:L-histidine catabolic process to glutamate and formate"/>
    <property type="evidence" value="ECO:0007669"/>
    <property type="project" value="UniProtKB-UniPathway"/>
</dbReference>
<dbReference type="FunFam" id="3.20.20.140:FF:000007">
    <property type="entry name" value="Imidazolonepropionase"/>
    <property type="match status" value="1"/>
</dbReference>
<dbReference type="Gene3D" id="3.20.20.140">
    <property type="entry name" value="Metal-dependent hydrolases"/>
    <property type="match status" value="1"/>
</dbReference>
<dbReference type="Gene3D" id="2.30.40.10">
    <property type="entry name" value="Urease, subunit C, domain 1"/>
    <property type="match status" value="1"/>
</dbReference>
<dbReference type="HAMAP" id="MF_00372">
    <property type="entry name" value="HutI"/>
    <property type="match status" value="1"/>
</dbReference>
<dbReference type="InterPro" id="IPR006680">
    <property type="entry name" value="Amidohydro-rel"/>
</dbReference>
<dbReference type="InterPro" id="IPR005920">
    <property type="entry name" value="HutI"/>
</dbReference>
<dbReference type="InterPro" id="IPR011059">
    <property type="entry name" value="Metal-dep_hydrolase_composite"/>
</dbReference>
<dbReference type="InterPro" id="IPR032466">
    <property type="entry name" value="Metal_Hydrolase"/>
</dbReference>
<dbReference type="NCBIfam" id="TIGR01224">
    <property type="entry name" value="hutI"/>
    <property type="match status" value="1"/>
</dbReference>
<dbReference type="PANTHER" id="PTHR42752">
    <property type="entry name" value="IMIDAZOLONEPROPIONASE"/>
    <property type="match status" value="1"/>
</dbReference>
<dbReference type="PANTHER" id="PTHR42752:SF1">
    <property type="entry name" value="IMIDAZOLONEPROPIONASE-RELATED"/>
    <property type="match status" value="1"/>
</dbReference>
<dbReference type="Pfam" id="PF01979">
    <property type="entry name" value="Amidohydro_1"/>
    <property type="match status" value="1"/>
</dbReference>
<dbReference type="SUPFAM" id="SSF51338">
    <property type="entry name" value="Composite domain of metallo-dependent hydrolases"/>
    <property type="match status" value="1"/>
</dbReference>
<dbReference type="SUPFAM" id="SSF51556">
    <property type="entry name" value="Metallo-dependent hydrolases"/>
    <property type="match status" value="1"/>
</dbReference>
<name>HUTI_SALEP</name>
<reference key="1">
    <citation type="journal article" date="2008" name="Genome Res.">
        <title>Comparative genome analysis of Salmonella enteritidis PT4 and Salmonella gallinarum 287/91 provides insights into evolutionary and host adaptation pathways.</title>
        <authorList>
            <person name="Thomson N.R."/>
            <person name="Clayton D.J."/>
            <person name="Windhorst D."/>
            <person name="Vernikos G."/>
            <person name="Davidson S."/>
            <person name="Churcher C."/>
            <person name="Quail M.A."/>
            <person name="Stevens M."/>
            <person name="Jones M.A."/>
            <person name="Watson M."/>
            <person name="Barron A."/>
            <person name="Layton A."/>
            <person name="Pickard D."/>
            <person name="Kingsley R.A."/>
            <person name="Bignell A."/>
            <person name="Clark L."/>
            <person name="Harris B."/>
            <person name="Ormond D."/>
            <person name="Abdellah Z."/>
            <person name="Brooks K."/>
            <person name="Cherevach I."/>
            <person name="Chillingworth T."/>
            <person name="Woodward J."/>
            <person name="Norberczak H."/>
            <person name="Lord A."/>
            <person name="Arrowsmith C."/>
            <person name="Jagels K."/>
            <person name="Moule S."/>
            <person name="Mungall K."/>
            <person name="Saunders M."/>
            <person name="Whitehead S."/>
            <person name="Chabalgoity J.A."/>
            <person name="Maskell D."/>
            <person name="Humphreys T."/>
            <person name="Roberts M."/>
            <person name="Barrow P.A."/>
            <person name="Dougan G."/>
            <person name="Parkhill J."/>
        </authorList>
    </citation>
    <scope>NUCLEOTIDE SEQUENCE [LARGE SCALE GENOMIC DNA]</scope>
    <source>
        <strain>P125109</strain>
    </source>
</reference>
<organism>
    <name type="scientific">Salmonella enteritidis PT4 (strain P125109)</name>
    <dbReference type="NCBI Taxonomy" id="550537"/>
    <lineage>
        <taxon>Bacteria</taxon>
        <taxon>Pseudomonadati</taxon>
        <taxon>Pseudomonadota</taxon>
        <taxon>Gammaproteobacteria</taxon>
        <taxon>Enterobacterales</taxon>
        <taxon>Enterobacteriaceae</taxon>
        <taxon>Salmonella</taxon>
    </lineage>
</organism>
<sequence>MRQLLPGDTVWRNIRLATMDPQRQAPYGLVDNQALIVREGHICDIVPETQLPVSGDNIHDMQGRLVTPGLIDCHTHLVFAGNRAAEWEQRLNGASYQHISAQGGGINATVSATRACAEETLYLLARERMMRLASEGVTLLEIKSGYGLELATEEKLLRVAAKLAAENAIDISPTLLAAHATPAEYRDDPDGYITLVCETMIPQLWQKGLFDAVDLFCESVGFNVAQSERVLQTAKALGIPVKGHVEQLSLLGGAQLVSRYQGLSADHIEYLDEAGVAAMRDGGTVGVLLPGAFYFLRETQRPPVELLRRYQVPVAVASDFNPGTSPFCSLHLAMNMACVQFGLTSEEAWAGVTRHAARALGRQATHGQLRADYRADFVVWDAEQPVEVVYEPGRNPLYQRVYRGQIS</sequence>